<sequence length="875" mass="101993">MSNDKYIHTDVEDKIYSYWEKNNLFKPTKNKKQFSVVIPPPNVTGSLHMGHALNNSIQDLLVRYHRMNNYETLWQPGTDHAGIATQALVEKKLTADGIDKNEIGREKFIEKVWEWKEEHGDIILNQLKKLGCSCDWSRNAFTMDENLSKSVLKVFVELHKKGLIYKDKKLVNWDTVLKTAISDLEVDQREVNSKIYYIQYPIEASSDFITIATTRPETMLGDTAIAVNPKDDRFKHLVGKFVTVPIVGKKIKIIEDEYADPEMGTGALKITPAHDFNDYEVGQRNNLEIINIFTEGGKVNENAPKEYIGLDRFEARKRIIKELKEKEFFVKEENIKNKVPYGDRSNSIIEPFLTEQWFVDAKKLSIKAKDIVNSKKTNFFPANWSKTYFQWMNNIEPWCISRQLWWGHQIPAWYGPDKKIFVAINEEEAKLDAKKFYNKDVDLIRDPDVLDTWFSSGLWPFATLGWPDNKEYVDKFYPTSVLVTGFDIIFFWVARMIMFGMEFLDKEPFKDVYVHALVKDEKGQKMSKSKGNVINPLDLIEKYSADALRFTLLSMASPGTDVKLSEDRVKGYRNFLNKLWNANNFLITNNCDFSKIDEKPILSININKWIYAELIETKNKIEKNLKDYRFDEAAKNAYQFTWHSYCDWYLELSKTILFSEDEKAKDEVRQVSAYVFKQILILLHPFIPFVTEEIWLNNKFDNTGKDFLMLANWPSGEFERDTSINQVEKIISIVSELRSFKNELSVSPGSFIDISIETVSKKEQSFFTENEIILKKLGRIKNLYNKDLDKPTATLMVSGDLFKVYFDEDVDLELIKKNLTTRQNKYQEEMNKISQRLANKGFVDRAPKDIVDQEKTNYNNLKNDVERISITIKGL</sequence>
<name>SYV_PELUB</name>
<gene>
    <name evidence="1" type="primary">valS</name>
    <name type="ordered locus">SAR11_0960</name>
</gene>
<keyword id="KW-0030">Aminoacyl-tRNA synthetase</keyword>
<keyword id="KW-0067">ATP-binding</keyword>
<keyword id="KW-0175">Coiled coil</keyword>
<keyword id="KW-0963">Cytoplasm</keyword>
<keyword id="KW-0436">Ligase</keyword>
<keyword id="KW-0547">Nucleotide-binding</keyword>
<keyword id="KW-0648">Protein biosynthesis</keyword>
<keyword id="KW-1185">Reference proteome</keyword>
<reference key="1">
    <citation type="journal article" date="2005" name="Science">
        <title>Genome streamlining in a cosmopolitan oceanic bacterium.</title>
        <authorList>
            <person name="Giovannoni S.J."/>
            <person name="Tripp H.J."/>
            <person name="Givan S."/>
            <person name="Podar M."/>
            <person name="Vergin K.L."/>
            <person name="Baptista D."/>
            <person name="Bibbs L."/>
            <person name="Eads J."/>
            <person name="Richardson T.H."/>
            <person name="Noordewier M."/>
            <person name="Rappe M.S."/>
            <person name="Short J.M."/>
            <person name="Carrington J.C."/>
            <person name="Mathur E.J."/>
        </authorList>
    </citation>
    <scope>NUCLEOTIDE SEQUENCE [LARGE SCALE GENOMIC DNA]</scope>
    <source>
        <strain>HTCC1062</strain>
    </source>
</reference>
<protein>
    <recommendedName>
        <fullName evidence="1">Valine--tRNA ligase</fullName>
        <ecNumber evidence="1">6.1.1.9</ecNumber>
    </recommendedName>
    <alternativeName>
        <fullName evidence="1">Valyl-tRNA synthetase</fullName>
        <shortName evidence="1">ValRS</shortName>
    </alternativeName>
</protein>
<organism>
    <name type="scientific">Pelagibacter ubique (strain HTCC1062)</name>
    <dbReference type="NCBI Taxonomy" id="335992"/>
    <lineage>
        <taxon>Bacteria</taxon>
        <taxon>Pseudomonadati</taxon>
        <taxon>Pseudomonadota</taxon>
        <taxon>Alphaproteobacteria</taxon>
        <taxon>Candidatus Pelagibacterales</taxon>
        <taxon>Candidatus Pelagibacteraceae</taxon>
        <taxon>Candidatus Pelagibacter</taxon>
    </lineage>
</organism>
<feature type="chain" id="PRO_0000224525" description="Valine--tRNA ligase">
    <location>
        <begin position="1"/>
        <end position="875"/>
    </location>
</feature>
<feature type="coiled-coil region" evidence="1">
    <location>
        <begin position="810"/>
        <end position="875"/>
    </location>
</feature>
<feature type="short sequence motif" description="'HIGH' region">
    <location>
        <begin position="41"/>
        <end position="51"/>
    </location>
</feature>
<feature type="short sequence motif" description="'KMSKS' region">
    <location>
        <begin position="525"/>
        <end position="529"/>
    </location>
</feature>
<feature type="binding site" evidence="1">
    <location>
        <position position="528"/>
    </location>
    <ligand>
        <name>ATP</name>
        <dbReference type="ChEBI" id="CHEBI:30616"/>
    </ligand>
</feature>
<accession>Q4FM20</accession>
<proteinExistence type="inferred from homology"/>
<comment type="function">
    <text evidence="1">Catalyzes the attachment of valine to tRNA(Val). As ValRS can inadvertently accommodate and process structurally similar amino acids such as threonine, to avoid such errors, it has a 'posttransfer' editing activity that hydrolyzes mischarged Thr-tRNA(Val) in a tRNA-dependent manner.</text>
</comment>
<comment type="catalytic activity">
    <reaction evidence="1">
        <text>tRNA(Val) + L-valine + ATP = L-valyl-tRNA(Val) + AMP + diphosphate</text>
        <dbReference type="Rhea" id="RHEA:10704"/>
        <dbReference type="Rhea" id="RHEA-COMP:9672"/>
        <dbReference type="Rhea" id="RHEA-COMP:9708"/>
        <dbReference type="ChEBI" id="CHEBI:30616"/>
        <dbReference type="ChEBI" id="CHEBI:33019"/>
        <dbReference type="ChEBI" id="CHEBI:57762"/>
        <dbReference type="ChEBI" id="CHEBI:78442"/>
        <dbReference type="ChEBI" id="CHEBI:78537"/>
        <dbReference type="ChEBI" id="CHEBI:456215"/>
        <dbReference type="EC" id="6.1.1.9"/>
    </reaction>
</comment>
<comment type="subunit">
    <text evidence="1">Monomer.</text>
</comment>
<comment type="subcellular location">
    <subcellularLocation>
        <location evidence="1">Cytoplasm</location>
    </subcellularLocation>
</comment>
<comment type="domain">
    <text evidence="1">ValRS has two distinct active sites: one for aminoacylation and one for editing. The misactivated threonine is translocated from the active site to the editing site.</text>
</comment>
<comment type="domain">
    <text evidence="1">The C-terminal coiled-coil domain is crucial for aminoacylation activity.</text>
</comment>
<comment type="similarity">
    <text evidence="1">Belongs to the class-I aminoacyl-tRNA synthetase family. ValS type 1 subfamily.</text>
</comment>
<dbReference type="EC" id="6.1.1.9" evidence="1"/>
<dbReference type="EMBL" id="CP000084">
    <property type="protein sequence ID" value="AAZ21768.1"/>
    <property type="molecule type" value="Genomic_DNA"/>
</dbReference>
<dbReference type="RefSeq" id="WP_011282067.1">
    <property type="nucleotide sequence ID" value="NC_007205.1"/>
</dbReference>
<dbReference type="SMR" id="Q4FM20"/>
<dbReference type="STRING" id="335992.SAR11_0960"/>
<dbReference type="GeneID" id="66295450"/>
<dbReference type="KEGG" id="pub:SAR11_0960"/>
<dbReference type="eggNOG" id="COG0525">
    <property type="taxonomic scope" value="Bacteria"/>
</dbReference>
<dbReference type="HOGENOM" id="CLU_001493_0_2_5"/>
<dbReference type="OrthoDB" id="9810365at2"/>
<dbReference type="Proteomes" id="UP000002528">
    <property type="component" value="Chromosome"/>
</dbReference>
<dbReference type="GO" id="GO:0005829">
    <property type="term" value="C:cytosol"/>
    <property type="evidence" value="ECO:0007669"/>
    <property type="project" value="TreeGrafter"/>
</dbReference>
<dbReference type="GO" id="GO:0002161">
    <property type="term" value="F:aminoacyl-tRNA deacylase activity"/>
    <property type="evidence" value="ECO:0007669"/>
    <property type="project" value="InterPro"/>
</dbReference>
<dbReference type="GO" id="GO:0005524">
    <property type="term" value="F:ATP binding"/>
    <property type="evidence" value="ECO:0007669"/>
    <property type="project" value="UniProtKB-UniRule"/>
</dbReference>
<dbReference type="GO" id="GO:0004832">
    <property type="term" value="F:valine-tRNA ligase activity"/>
    <property type="evidence" value="ECO:0007669"/>
    <property type="project" value="UniProtKB-UniRule"/>
</dbReference>
<dbReference type="GO" id="GO:0006438">
    <property type="term" value="P:valyl-tRNA aminoacylation"/>
    <property type="evidence" value="ECO:0007669"/>
    <property type="project" value="UniProtKB-UniRule"/>
</dbReference>
<dbReference type="CDD" id="cd07962">
    <property type="entry name" value="Anticodon_Ia_Val"/>
    <property type="match status" value="1"/>
</dbReference>
<dbReference type="CDD" id="cd00817">
    <property type="entry name" value="ValRS_core"/>
    <property type="match status" value="1"/>
</dbReference>
<dbReference type="FunFam" id="3.40.50.620:FF:000032">
    <property type="entry name" value="Valine--tRNA ligase"/>
    <property type="match status" value="1"/>
</dbReference>
<dbReference type="FunFam" id="3.40.50.620:FF:000078">
    <property type="entry name" value="Valine--tRNA ligase, mitochondrial"/>
    <property type="match status" value="1"/>
</dbReference>
<dbReference type="FunFam" id="3.90.740.10:FF:000005">
    <property type="entry name" value="Valine--tRNA ligase, mitochondrial"/>
    <property type="match status" value="1"/>
</dbReference>
<dbReference type="Gene3D" id="3.40.50.620">
    <property type="entry name" value="HUPs"/>
    <property type="match status" value="2"/>
</dbReference>
<dbReference type="Gene3D" id="1.10.730.10">
    <property type="entry name" value="Isoleucyl-tRNA Synthetase, Domain 1"/>
    <property type="match status" value="1"/>
</dbReference>
<dbReference type="Gene3D" id="1.10.287.380">
    <property type="entry name" value="Valyl-tRNA synthetase, C-terminal domain"/>
    <property type="match status" value="1"/>
</dbReference>
<dbReference type="Gene3D" id="3.90.740.10">
    <property type="entry name" value="Valyl/Leucyl/Isoleucyl-tRNA synthetase, editing domain"/>
    <property type="match status" value="1"/>
</dbReference>
<dbReference type="HAMAP" id="MF_02004">
    <property type="entry name" value="Val_tRNA_synth_type1"/>
    <property type="match status" value="1"/>
</dbReference>
<dbReference type="InterPro" id="IPR001412">
    <property type="entry name" value="aa-tRNA-synth_I_CS"/>
</dbReference>
<dbReference type="InterPro" id="IPR002300">
    <property type="entry name" value="aa-tRNA-synth_Ia"/>
</dbReference>
<dbReference type="InterPro" id="IPR033705">
    <property type="entry name" value="Anticodon_Ia_Val"/>
</dbReference>
<dbReference type="InterPro" id="IPR013155">
    <property type="entry name" value="M/V/L/I-tRNA-synth_anticd-bd"/>
</dbReference>
<dbReference type="InterPro" id="IPR014729">
    <property type="entry name" value="Rossmann-like_a/b/a_fold"/>
</dbReference>
<dbReference type="InterPro" id="IPR010978">
    <property type="entry name" value="tRNA-bd_arm"/>
</dbReference>
<dbReference type="InterPro" id="IPR009080">
    <property type="entry name" value="tRNAsynth_Ia_anticodon-bd"/>
</dbReference>
<dbReference type="InterPro" id="IPR037118">
    <property type="entry name" value="Val-tRNA_synth_C_sf"/>
</dbReference>
<dbReference type="InterPro" id="IPR019499">
    <property type="entry name" value="Val-tRNA_synth_tRNA-bd"/>
</dbReference>
<dbReference type="InterPro" id="IPR009008">
    <property type="entry name" value="Val/Leu/Ile-tRNA-synth_edit"/>
</dbReference>
<dbReference type="InterPro" id="IPR002303">
    <property type="entry name" value="Valyl-tRNA_ligase"/>
</dbReference>
<dbReference type="NCBIfam" id="NF004349">
    <property type="entry name" value="PRK05729.1"/>
    <property type="match status" value="1"/>
</dbReference>
<dbReference type="NCBIfam" id="TIGR00422">
    <property type="entry name" value="valS"/>
    <property type="match status" value="1"/>
</dbReference>
<dbReference type="PANTHER" id="PTHR11946:SF93">
    <property type="entry name" value="VALINE--TRNA LIGASE, CHLOROPLASTIC_MITOCHONDRIAL 2"/>
    <property type="match status" value="1"/>
</dbReference>
<dbReference type="PANTHER" id="PTHR11946">
    <property type="entry name" value="VALYL-TRNA SYNTHETASES"/>
    <property type="match status" value="1"/>
</dbReference>
<dbReference type="Pfam" id="PF08264">
    <property type="entry name" value="Anticodon_1"/>
    <property type="match status" value="1"/>
</dbReference>
<dbReference type="Pfam" id="PF00133">
    <property type="entry name" value="tRNA-synt_1"/>
    <property type="match status" value="1"/>
</dbReference>
<dbReference type="Pfam" id="PF10458">
    <property type="entry name" value="Val_tRNA-synt_C"/>
    <property type="match status" value="1"/>
</dbReference>
<dbReference type="PRINTS" id="PR00986">
    <property type="entry name" value="TRNASYNTHVAL"/>
</dbReference>
<dbReference type="SUPFAM" id="SSF47323">
    <property type="entry name" value="Anticodon-binding domain of a subclass of class I aminoacyl-tRNA synthetases"/>
    <property type="match status" value="1"/>
</dbReference>
<dbReference type="SUPFAM" id="SSF52374">
    <property type="entry name" value="Nucleotidylyl transferase"/>
    <property type="match status" value="1"/>
</dbReference>
<dbReference type="SUPFAM" id="SSF46589">
    <property type="entry name" value="tRNA-binding arm"/>
    <property type="match status" value="1"/>
</dbReference>
<dbReference type="SUPFAM" id="SSF50677">
    <property type="entry name" value="ValRS/IleRS/LeuRS editing domain"/>
    <property type="match status" value="1"/>
</dbReference>
<dbReference type="PROSITE" id="PS00178">
    <property type="entry name" value="AA_TRNA_LIGASE_I"/>
    <property type="match status" value="1"/>
</dbReference>
<evidence type="ECO:0000255" key="1">
    <source>
        <dbReference type="HAMAP-Rule" id="MF_02004"/>
    </source>
</evidence>